<protein>
    <recommendedName>
        <fullName evidence="1">Thymidylate synthase</fullName>
        <shortName evidence="1">TS</shortName>
        <shortName evidence="1">TSase</shortName>
        <ecNumber evidence="1">2.1.1.45</ecNumber>
    </recommendedName>
</protein>
<dbReference type="EC" id="2.1.1.45" evidence="1"/>
<dbReference type="EMBL" id="CP000034">
    <property type="protein sequence ID" value="ABB63061.1"/>
    <property type="molecule type" value="Genomic_DNA"/>
</dbReference>
<dbReference type="RefSeq" id="WP_000816253.1">
    <property type="nucleotide sequence ID" value="NC_007606.1"/>
</dbReference>
<dbReference type="RefSeq" id="YP_404552.1">
    <property type="nucleotide sequence ID" value="NC_007606.1"/>
</dbReference>
<dbReference type="SMR" id="Q32C94"/>
<dbReference type="STRING" id="300267.SDY_3044"/>
<dbReference type="EnsemblBacteria" id="ABB63061">
    <property type="protein sequence ID" value="ABB63061"/>
    <property type="gene ID" value="SDY_3044"/>
</dbReference>
<dbReference type="KEGG" id="sdy:SDY_3044"/>
<dbReference type="PATRIC" id="fig|300267.13.peg.3649"/>
<dbReference type="HOGENOM" id="CLU_021669_0_0_6"/>
<dbReference type="UniPathway" id="UPA00575"/>
<dbReference type="Proteomes" id="UP000002716">
    <property type="component" value="Chromosome"/>
</dbReference>
<dbReference type="GO" id="GO:0005829">
    <property type="term" value="C:cytosol"/>
    <property type="evidence" value="ECO:0007669"/>
    <property type="project" value="TreeGrafter"/>
</dbReference>
<dbReference type="GO" id="GO:0004799">
    <property type="term" value="F:thymidylate synthase activity"/>
    <property type="evidence" value="ECO:0007669"/>
    <property type="project" value="UniProtKB-UniRule"/>
</dbReference>
<dbReference type="GO" id="GO:0006231">
    <property type="term" value="P:dTMP biosynthetic process"/>
    <property type="evidence" value="ECO:0007669"/>
    <property type="project" value="UniProtKB-UniRule"/>
</dbReference>
<dbReference type="GO" id="GO:0006235">
    <property type="term" value="P:dTTP biosynthetic process"/>
    <property type="evidence" value="ECO:0007669"/>
    <property type="project" value="UniProtKB-UniRule"/>
</dbReference>
<dbReference type="GO" id="GO:0032259">
    <property type="term" value="P:methylation"/>
    <property type="evidence" value="ECO:0007669"/>
    <property type="project" value="UniProtKB-KW"/>
</dbReference>
<dbReference type="CDD" id="cd00351">
    <property type="entry name" value="TS_Pyrimidine_HMase"/>
    <property type="match status" value="1"/>
</dbReference>
<dbReference type="FunFam" id="3.30.572.10:FF:000001">
    <property type="entry name" value="Thymidylate synthase"/>
    <property type="match status" value="1"/>
</dbReference>
<dbReference type="Gene3D" id="3.30.572.10">
    <property type="entry name" value="Thymidylate synthase/dCMP hydroxymethylase domain"/>
    <property type="match status" value="1"/>
</dbReference>
<dbReference type="HAMAP" id="MF_00008">
    <property type="entry name" value="Thymidy_synth_bact"/>
    <property type="match status" value="1"/>
</dbReference>
<dbReference type="InterPro" id="IPR045097">
    <property type="entry name" value="Thymidate_synth/dCMP_Mease"/>
</dbReference>
<dbReference type="InterPro" id="IPR023451">
    <property type="entry name" value="Thymidate_synth/dCMP_Mease_dom"/>
</dbReference>
<dbReference type="InterPro" id="IPR036926">
    <property type="entry name" value="Thymidate_synth/dCMP_Mease_sf"/>
</dbReference>
<dbReference type="InterPro" id="IPR000398">
    <property type="entry name" value="Thymidylate_synthase"/>
</dbReference>
<dbReference type="InterPro" id="IPR020940">
    <property type="entry name" value="Thymidylate_synthase_AS"/>
</dbReference>
<dbReference type="NCBIfam" id="NF002497">
    <property type="entry name" value="PRK01827.1-3"/>
    <property type="match status" value="1"/>
</dbReference>
<dbReference type="NCBIfam" id="NF002499">
    <property type="entry name" value="PRK01827.1-5"/>
    <property type="match status" value="1"/>
</dbReference>
<dbReference type="NCBIfam" id="TIGR03284">
    <property type="entry name" value="thym_sym"/>
    <property type="match status" value="2"/>
</dbReference>
<dbReference type="PANTHER" id="PTHR11548:SF9">
    <property type="entry name" value="THYMIDYLATE SYNTHASE"/>
    <property type="match status" value="1"/>
</dbReference>
<dbReference type="PANTHER" id="PTHR11548">
    <property type="entry name" value="THYMIDYLATE SYNTHASE 1"/>
    <property type="match status" value="1"/>
</dbReference>
<dbReference type="Pfam" id="PF00303">
    <property type="entry name" value="Thymidylat_synt"/>
    <property type="match status" value="1"/>
</dbReference>
<dbReference type="PRINTS" id="PR00108">
    <property type="entry name" value="THYMDSNTHASE"/>
</dbReference>
<dbReference type="SUPFAM" id="SSF55831">
    <property type="entry name" value="Thymidylate synthase/dCMP hydroxymethylase"/>
    <property type="match status" value="1"/>
</dbReference>
<dbReference type="PROSITE" id="PS00091">
    <property type="entry name" value="THYMIDYLATE_SYNTHASE"/>
    <property type="match status" value="1"/>
</dbReference>
<proteinExistence type="inferred from homology"/>
<comment type="function">
    <text evidence="1">Catalyzes the reductive methylation of 2'-deoxyuridine-5'-monophosphate (dUMP) to 2'-deoxythymidine-5'-monophosphate (dTMP) while utilizing 5,10-methylenetetrahydrofolate (mTHF) as the methyl donor and reductant in the reaction, yielding dihydrofolate (DHF) as a by-product. This enzymatic reaction provides an intracellular de novo source of dTMP, an essential precursor for DNA biosynthesis.</text>
</comment>
<comment type="catalytic activity">
    <reaction evidence="1">
        <text>dUMP + (6R)-5,10-methylene-5,6,7,8-tetrahydrofolate = 7,8-dihydrofolate + dTMP</text>
        <dbReference type="Rhea" id="RHEA:12104"/>
        <dbReference type="ChEBI" id="CHEBI:15636"/>
        <dbReference type="ChEBI" id="CHEBI:57451"/>
        <dbReference type="ChEBI" id="CHEBI:63528"/>
        <dbReference type="ChEBI" id="CHEBI:246422"/>
        <dbReference type="EC" id="2.1.1.45"/>
    </reaction>
</comment>
<comment type="pathway">
    <text evidence="1">Pyrimidine metabolism; dTTP biosynthesis.</text>
</comment>
<comment type="subunit">
    <text evidence="1">Homodimer.</text>
</comment>
<comment type="subcellular location">
    <subcellularLocation>
        <location evidence="1">Cytoplasm</location>
    </subcellularLocation>
</comment>
<comment type="similarity">
    <text evidence="1">Belongs to the thymidylate synthase family. Bacterial-type ThyA subfamily.</text>
</comment>
<reference key="1">
    <citation type="journal article" date="2005" name="Nucleic Acids Res.">
        <title>Genome dynamics and diversity of Shigella species, the etiologic agents of bacillary dysentery.</title>
        <authorList>
            <person name="Yang F."/>
            <person name="Yang J."/>
            <person name="Zhang X."/>
            <person name="Chen L."/>
            <person name="Jiang Y."/>
            <person name="Yan Y."/>
            <person name="Tang X."/>
            <person name="Wang J."/>
            <person name="Xiong Z."/>
            <person name="Dong J."/>
            <person name="Xue Y."/>
            <person name="Zhu Y."/>
            <person name="Xu X."/>
            <person name="Sun L."/>
            <person name="Chen S."/>
            <person name="Nie H."/>
            <person name="Peng J."/>
            <person name="Xu J."/>
            <person name="Wang Y."/>
            <person name="Yuan Z."/>
            <person name="Wen Y."/>
            <person name="Yao Z."/>
            <person name="Shen Y."/>
            <person name="Qiang B."/>
            <person name="Hou Y."/>
            <person name="Yu J."/>
            <person name="Jin Q."/>
        </authorList>
    </citation>
    <scope>NUCLEOTIDE SEQUENCE [LARGE SCALE GENOMIC DNA]</scope>
    <source>
        <strain>Sd197</strain>
    </source>
</reference>
<organism>
    <name type="scientific">Shigella dysenteriae serotype 1 (strain Sd197)</name>
    <dbReference type="NCBI Taxonomy" id="300267"/>
    <lineage>
        <taxon>Bacteria</taxon>
        <taxon>Pseudomonadati</taxon>
        <taxon>Pseudomonadota</taxon>
        <taxon>Gammaproteobacteria</taxon>
        <taxon>Enterobacterales</taxon>
        <taxon>Enterobacteriaceae</taxon>
        <taxon>Shigella</taxon>
    </lineage>
</organism>
<keyword id="KW-0963">Cytoplasm</keyword>
<keyword id="KW-0489">Methyltransferase</keyword>
<keyword id="KW-0545">Nucleotide biosynthesis</keyword>
<keyword id="KW-1185">Reference proteome</keyword>
<keyword id="KW-0808">Transferase</keyword>
<evidence type="ECO:0000255" key="1">
    <source>
        <dbReference type="HAMAP-Rule" id="MF_00008"/>
    </source>
</evidence>
<feature type="chain" id="PRO_1000000679" description="Thymidylate synthase">
    <location>
        <begin position="1"/>
        <end position="264"/>
    </location>
</feature>
<feature type="active site" description="Nucleophile" evidence="1">
    <location>
        <position position="146"/>
    </location>
</feature>
<feature type="binding site" description="in other chain" evidence="1">
    <location>
        <position position="21"/>
    </location>
    <ligand>
        <name>dUMP</name>
        <dbReference type="ChEBI" id="CHEBI:246422"/>
        <note>ligand shared between dimeric partners</note>
    </ligand>
</feature>
<feature type="binding site" evidence="1">
    <location>
        <position position="51"/>
    </location>
    <ligand>
        <name>(6R)-5,10-methylene-5,6,7,8-tetrahydrofolate</name>
        <dbReference type="ChEBI" id="CHEBI:15636"/>
    </ligand>
</feature>
<feature type="binding site" evidence="1">
    <location>
        <begin position="126"/>
        <end position="127"/>
    </location>
    <ligand>
        <name>dUMP</name>
        <dbReference type="ChEBI" id="CHEBI:246422"/>
        <note>ligand shared between dimeric partners</note>
    </ligand>
</feature>
<feature type="binding site" description="in other chain" evidence="1">
    <location>
        <begin position="166"/>
        <end position="169"/>
    </location>
    <ligand>
        <name>dUMP</name>
        <dbReference type="ChEBI" id="CHEBI:246422"/>
        <note>ligand shared between dimeric partners</note>
    </ligand>
</feature>
<feature type="binding site" evidence="1">
    <location>
        <position position="169"/>
    </location>
    <ligand>
        <name>(6R)-5,10-methylene-5,6,7,8-tetrahydrofolate</name>
        <dbReference type="ChEBI" id="CHEBI:15636"/>
    </ligand>
</feature>
<feature type="binding site" description="in other chain" evidence="1">
    <location>
        <position position="177"/>
    </location>
    <ligand>
        <name>dUMP</name>
        <dbReference type="ChEBI" id="CHEBI:246422"/>
        <note>ligand shared between dimeric partners</note>
    </ligand>
</feature>
<feature type="binding site" description="in other chain" evidence="1">
    <location>
        <begin position="207"/>
        <end position="209"/>
    </location>
    <ligand>
        <name>dUMP</name>
        <dbReference type="ChEBI" id="CHEBI:246422"/>
        <note>ligand shared between dimeric partners</note>
    </ligand>
</feature>
<feature type="binding site" evidence="1">
    <location>
        <position position="263"/>
    </location>
    <ligand>
        <name>(6R)-5,10-methylene-5,6,7,8-tetrahydrofolate</name>
        <dbReference type="ChEBI" id="CHEBI:15636"/>
    </ligand>
</feature>
<sequence length="264" mass="30493">MKQYLELMQKVLDEGTQKNDRTGTGTLSIFGHQMRFNLQEGFPLVTTKRCHLRSIIHELLWFLQGNTNIAYLHENNVTIWDEWADENGDLGPVYGKQWRAWPTPDGRHIDQITTVLNQLKNDPDSRRIIVSAWNVGELDKMALAPCHAFFQFYVADGKLSCQLYQRSCDVFLGLPFNIASYALLVHMMAQQCDLEVGDFVWTGGDTHLYSNHMDQTHLQLSREPRPLPKLIIKRKPESIFDYRFEDFEIEGYDPHPGIKAPVAI</sequence>
<gene>
    <name evidence="1" type="primary">thyA</name>
    <name type="ordered locus">SDY_3044</name>
</gene>
<accession>Q32C94</accession>
<name>TYSY_SHIDS</name>